<sequence length="364" mass="39839">MSEMGFLRSVAAVLLLAVFSHAAVVTENGLPIQWRKAPSDLSHLPISNTGVQVNPWVYSQRMTMLKMVINATNAYMSSMGPGEQENPLWSLPLQLGWKLKSGRLADPTPDSSSTCGSEASDPVCISPLSFFGCVNYYLSVLPFLAAVETGVVSSGGHQMLIQVPAEVAQDYCSSYSDCSTKHPNTMAKWHLFFQSLRQVSQSKESDFNKKDSILGLMWAAEEESIQTASGACTERQKLYSSPEVSFQQSSVNLGAFISAAHYHASIERSGKFMSHLPSRVLQEADSPPNIADLSTEENHALYMLSWMNSINQLLGGSLVDLWRKAMCSAQAREKGQAFLDDLILDPKFPGSSLWSIICVMSTSC</sequence>
<protein>
    <recommendedName>
        <fullName evidence="3">Protein leg1b</fullName>
        <shortName evidence="3">Leg1-B</shortName>
    </recommendedName>
    <alternativeName>
        <fullName evidence="3">Liver-enriched gene protein 1-B</fullName>
    </alternativeName>
</protein>
<dbReference type="EMBL" id="BC065450">
    <property type="protein sequence ID" value="AAH65450.1"/>
    <property type="molecule type" value="mRNA"/>
</dbReference>
<dbReference type="EMBL" id="BC097023">
    <property type="protein sequence ID" value="AAH97023.1"/>
    <property type="molecule type" value="mRNA"/>
</dbReference>
<dbReference type="RefSeq" id="NP_998368.1">
    <property type="nucleotide sequence ID" value="NM_213203.1"/>
</dbReference>
<dbReference type="SMR" id="Q4QRF7"/>
<dbReference type="FunCoup" id="Q4QRF7">
    <property type="interactions" value="1780"/>
</dbReference>
<dbReference type="STRING" id="7955.ENSDARP00000016639"/>
<dbReference type="GlyCosmos" id="Q4QRF7">
    <property type="glycosylation" value="1 site, No reported glycans"/>
</dbReference>
<dbReference type="PaxDb" id="7955-ENSDARP00000016639"/>
<dbReference type="PeptideAtlas" id="Q4QRF7"/>
<dbReference type="GeneID" id="406484"/>
<dbReference type="KEGG" id="dre:406484"/>
<dbReference type="AGR" id="ZFIN:ZDB-GENE-040426-2281"/>
<dbReference type="CTD" id="406484"/>
<dbReference type="ZFIN" id="ZDB-GENE-040426-2281">
    <property type="gene designation" value="leg1.2"/>
</dbReference>
<dbReference type="eggNOG" id="ENOG502R60Y">
    <property type="taxonomic scope" value="Eukaryota"/>
</dbReference>
<dbReference type="InParanoid" id="Q4QRF7"/>
<dbReference type="OrthoDB" id="17046at2759"/>
<dbReference type="PRO" id="PR:Q4QRF7"/>
<dbReference type="Proteomes" id="UP000000437">
    <property type="component" value="Chromosome 20"/>
</dbReference>
<dbReference type="GO" id="GO:0005615">
    <property type="term" value="C:extracellular space"/>
    <property type="evidence" value="ECO:0000314"/>
    <property type="project" value="ZFIN"/>
</dbReference>
<dbReference type="GO" id="GO:0055123">
    <property type="term" value="P:digestive system development"/>
    <property type="evidence" value="ECO:0000315"/>
    <property type="project" value="ZFIN"/>
</dbReference>
<dbReference type="GO" id="GO:0001889">
    <property type="term" value="P:liver development"/>
    <property type="evidence" value="ECO:0000315"/>
    <property type="project" value="ZFIN"/>
</dbReference>
<dbReference type="InterPro" id="IPR008499">
    <property type="entry name" value="Leg1"/>
</dbReference>
<dbReference type="PANTHER" id="PTHR18820">
    <property type="entry name" value="LEG1"/>
    <property type="match status" value="1"/>
</dbReference>
<dbReference type="PANTHER" id="PTHR18820:SF1">
    <property type="entry name" value="PROTEIN LEG1 HOMOLOG"/>
    <property type="match status" value="1"/>
</dbReference>
<dbReference type="Pfam" id="PF05612">
    <property type="entry name" value="Leg1"/>
    <property type="match status" value="1"/>
</dbReference>
<proteinExistence type="evidence at protein level"/>
<accession>Q4QRF7</accession>
<accession>Q6P0T9</accession>
<organism>
    <name type="scientific">Danio rerio</name>
    <name type="common">Zebrafish</name>
    <name type="synonym">Brachydanio rerio</name>
    <dbReference type="NCBI Taxonomy" id="7955"/>
    <lineage>
        <taxon>Eukaryota</taxon>
        <taxon>Metazoa</taxon>
        <taxon>Chordata</taxon>
        <taxon>Craniata</taxon>
        <taxon>Vertebrata</taxon>
        <taxon>Euteleostomi</taxon>
        <taxon>Actinopterygii</taxon>
        <taxon>Neopterygii</taxon>
        <taxon>Teleostei</taxon>
        <taxon>Ostariophysi</taxon>
        <taxon>Cypriniformes</taxon>
        <taxon>Danionidae</taxon>
        <taxon>Danioninae</taxon>
        <taxon>Danio</taxon>
    </lineage>
</organism>
<evidence type="ECO:0000255" key="1"/>
<evidence type="ECO:0000269" key="2">
    <source>
    </source>
</evidence>
<evidence type="ECO:0000303" key="3">
    <source>
    </source>
</evidence>
<evidence type="ECO:0000305" key="4"/>
<reference key="1">
    <citation type="submission" date="2005-06" db="EMBL/GenBank/DDBJ databases">
        <authorList>
            <consortium name="NIH - Zebrafish Gene Collection (ZGC) project"/>
        </authorList>
    </citation>
    <scope>NUCLEOTIDE SEQUENCE [LARGE SCALE MRNA]</scope>
    <source>
        <strain>AB</strain>
        <tissue>Liver</tissue>
    </source>
</reference>
<reference key="2">
    <citation type="journal article" date="2011" name="PLoS ONE">
        <title>liver-enriched gene 1a and 1b encode novel secretory proteins essential for normal liver development in zebrafish.</title>
        <authorList>
            <person name="Chang C."/>
            <person name="Hu M."/>
            <person name="Zhu Z."/>
            <person name="Lo L.J."/>
            <person name="Chen J."/>
            <person name="Peng J."/>
        </authorList>
    </citation>
    <scope>FUNCTION</scope>
    <scope>DEVELOPMENTAL STAGE</scope>
    <scope>TISSUE SPECIFICITY</scope>
    <scope>SUBCELLULAR LOCATION</scope>
    <scope>DISRUPTION PHENOTYPE</scope>
</reference>
<name>LEG1B_DANRE</name>
<gene>
    <name evidence="3" type="primary">leg1b</name>
    <name type="ORF">zgc:77778</name>
</gene>
<keyword id="KW-0217">Developmental protein</keyword>
<keyword id="KW-0325">Glycoprotein</keyword>
<keyword id="KW-1185">Reference proteome</keyword>
<keyword id="KW-0964">Secreted</keyword>
<keyword id="KW-0732">Signal</keyword>
<comment type="function">
    <text evidence="2">Involved in early development of liver, exocrine pancreas and intestine, probably through cell cycle regulation. In liver, its function is partially redundant with leg1a function.</text>
</comment>
<comment type="subcellular location">
    <subcellularLocation>
        <location evidence="2">Secreted</location>
    </subcellularLocation>
</comment>
<comment type="tissue specificity">
    <text evidence="2">Detected in all tissues tested, with the highest levels in serum (at protein level). At mRNA level, only expressed in liver.</text>
</comment>
<comment type="developmental stage">
    <text>Expressed as early as 24 hours post fecondation (hpf), expressed at lower levels than leg1a.</text>
</comment>
<comment type="disruption phenotype">
    <text evidence="2">Morpholino knockdown of the protein causes a small liver phenotype. Morpholino which can simultaneously block the translation of leg1a and leg1b, causes a more severe small liver phenotype with hypoplastic exocrine pancreas and intestinal tube as well.</text>
</comment>
<comment type="similarity">
    <text evidence="4">Belongs to the LEG1 family.</text>
</comment>
<feature type="signal peptide" evidence="1">
    <location>
        <begin position="1"/>
        <end position="22"/>
    </location>
</feature>
<feature type="chain" id="PRO_0000252387" description="Protein leg1b">
    <location>
        <begin position="23"/>
        <end position="364"/>
    </location>
</feature>
<feature type="glycosylation site" description="N-linked (GlcNAc...) asparagine" evidence="1">
    <location>
        <position position="70"/>
    </location>
</feature>
<feature type="sequence conflict" description="In Ref. 1; AAH65450." evidence="4" ref="1">
    <original>Q</original>
    <variation>H</variation>
    <location>
        <position position="198"/>
    </location>
</feature>
<feature type="sequence conflict" description="In Ref. 1; AAH65450." evidence="4" ref="1">
    <original>E</original>
    <variation>D</variation>
    <location>
        <position position="204"/>
    </location>
</feature>
<feature type="sequence conflict" description="In Ref. 1; AAH65450." evidence="4" ref="1">
    <original>S</original>
    <variation>A</variation>
    <location>
        <position position="269"/>
    </location>
</feature>